<dbReference type="EC" id="3.6.4.13" evidence="1"/>
<dbReference type="EMBL" id="CU329671">
    <property type="protein sequence ID" value="CAA21146.1"/>
    <property type="molecule type" value="Genomic_DNA"/>
</dbReference>
<dbReference type="PIR" id="T39966">
    <property type="entry name" value="T39966"/>
</dbReference>
<dbReference type="RefSeq" id="NP_595956.1">
    <property type="nucleotide sequence ID" value="NM_001021865.2"/>
</dbReference>
<dbReference type="SMR" id="O74764"/>
<dbReference type="BioGRID" id="277124">
    <property type="interactions" value="1"/>
</dbReference>
<dbReference type="FunCoup" id="O74764">
    <property type="interactions" value="1046"/>
</dbReference>
<dbReference type="STRING" id="284812.O74764"/>
<dbReference type="iPTMnet" id="O74764"/>
<dbReference type="PaxDb" id="4896-SPBC24C6.02.1"/>
<dbReference type="EnsemblFungi" id="SPBC24C6.02.1">
    <property type="protein sequence ID" value="SPBC24C6.02.1:pep"/>
    <property type="gene ID" value="SPBC24C6.02"/>
</dbReference>
<dbReference type="GeneID" id="2540598"/>
<dbReference type="KEGG" id="spo:2540598"/>
<dbReference type="PomBase" id="SPBC24C6.02">
    <property type="gene designation" value="spb4"/>
</dbReference>
<dbReference type="VEuPathDB" id="FungiDB:SPBC24C6.02"/>
<dbReference type="eggNOG" id="KOG0345">
    <property type="taxonomic scope" value="Eukaryota"/>
</dbReference>
<dbReference type="HOGENOM" id="CLU_003041_26_4_1"/>
<dbReference type="InParanoid" id="O74764"/>
<dbReference type="OMA" id="AYKEHEC"/>
<dbReference type="PhylomeDB" id="O74764"/>
<dbReference type="PRO" id="PR:O74764"/>
<dbReference type="Proteomes" id="UP000002485">
    <property type="component" value="Chromosome II"/>
</dbReference>
<dbReference type="GO" id="GO:0005730">
    <property type="term" value="C:nucleolus"/>
    <property type="evidence" value="ECO:0007005"/>
    <property type="project" value="PomBase"/>
</dbReference>
<dbReference type="GO" id="GO:0005524">
    <property type="term" value="F:ATP binding"/>
    <property type="evidence" value="ECO:0007669"/>
    <property type="project" value="UniProtKB-KW"/>
</dbReference>
<dbReference type="GO" id="GO:0016887">
    <property type="term" value="F:ATP hydrolysis activity"/>
    <property type="evidence" value="ECO:0007669"/>
    <property type="project" value="RHEA"/>
</dbReference>
<dbReference type="GO" id="GO:0003723">
    <property type="term" value="F:RNA binding"/>
    <property type="evidence" value="ECO:0007669"/>
    <property type="project" value="UniProtKB-KW"/>
</dbReference>
<dbReference type="GO" id="GO:0003724">
    <property type="term" value="F:RNA helicase activity"/>
    <property type="evidence" value="ECO:0000266"/>
    <property type="project" value="PomBase"/>
</dbReference>
<dbReference type="GO" id="GO:0006364">
    <property type="term" value="P:rRNA processing"/>
    <property type="evidence" value="ECO:0000266"/>
    <property type="project" value="PomBase"/>
</dbReference>
<dbReference type="CDD" id="cd17960">
    <property type="entry name" value="DEADc_DDX55"/>
    <property type="match status" value="1"/>
</dbReference>
<dbReference type="CDD" id="cd18787">
    <property type="entry name" value="SF2_C_DEAD"/>
    <property type="match status" value="1"/>
</dbReference>
<dbReference type="Gene3D" id="3.40.50.300">
    <property type="entry name" value="P-loop containing nucleotide triphosphate hydrolases"/>
    <property type="match status" value="2"/>
</dbReference>
<dbReference type="InterPro" id="IPR056330">
    <property type="entry name" value="CTT_SPB4"/>
</dbReference>
<dbReference type="InterPro" id="IPR011545">
    <property type="entry name" value="DEAD/DEAH_box_helicase_dom"/>
</dbReference>
<dbReference type="InterPro" id="IPR014001">
    <property type="entry name" value="Helicase_ATP-bd"/>
</dbReference>
<dbReference type="InterPro" id="IPR001650">
    <property type="entry name" value="Helicase_C-like"/>
</dbReference>
<dbReference type="InterPro" id="IPR027417">
    <property type="entry name" value="P-loop_NTPase"/>
</dbReference>
<dbReference type="InterPro" id="IPR014014">
    <property type="entry name" value="RNA_helicase_DEAD_Q_motif"/>
</dbReference>
<dbReference type="InterPro" id="IPR025313">
    <property type="entry name" value="SPB4-like_CTE"/>
</dbReference>
<dbReference type="PANTHER" id="PTHR24031">
    <property type="entry name" value="RNA HELICASE"/>
    <property type="match status" value="1"/>
</dbReference>
<dbReference type="Pfam" id="PF13959">
    <property type="entry name" value="CTE_SPB4"/>
    <property type="match status" value="1"/>
</dbReference>
<dbReference type="Pfam" id="PF23681">
    <property type="entry name" value="CTT_SPB4"/>
    <property type="match status" value="1"/>
</dbReference>
<dbReference type="Pfam" id="PF00270">
    <property type="entry name" value="DEAD"/>
    <property type="match status" value="1"/>
</dbReference>
<dbReference type="Pfam" id="PF00271">
    <property type="entry name" value="Helicase_C"/>
    <property type="match status" value="1"/>
</dbReference>
<dbReference type="SMART" id="SM00487">
    <property type="entry name" value="DEXDc"/>
    <property type="match status" value="1"/>
</dbReference>
<dbReference type="SMART" id="SM01178">
    <property type="entry name" value="DUF4217"/>
    <property type="match status" value="1"/>
</dbReference>
<dbReference type="SMART" id="SM00490">
    <property type="entry name" value="HELICc"/>
    <property type="match status" value="1"/>
</dbReference>
<dbReference type="SUPFAM" id="SSF52540">
    <property type="entry name" value="P-loop containing nucleoside triphosphate hydrolases"/>
    <property type="match status" value="2"/>
</dbReference>
<dbReference type="PROSITE" id="PS51192">
    <property type="entry name" value="HELICASE_ATP_BIND_1"/>
    <property type="match status" value="1"/>
</dbReference>
<dbReference type="PROSITE" id="PS51194">
    <property type="entry name" value="HELICASE_CTER"/>
    <property type="match status" value="1"/>
</dbReference>
<dbReference type="PROSITE" id="PS51195">
    <property type="entry name" value="Q_MOTIF"/>
    <property type="match status" value="1"/>
</dbReference>
<name>SPB4_SCHPO</name>
<organism>
    <name type="scientific">Schizosaccharomyces pombe (strain 972 / ATCC 24843)</name>
    <name type="common">Fission yeast</name>
    <dbReference type="NCBI Taxonomy" id="284812"/>
    <lineage>
        <taxon>Eukaryota</taxon>
        <taxon>Fungi</taxon>
        <taxon>Dikarya</taxon>
        <taxon>Ascomycota</taxon>
        <taxon>Taphrinomycotina</taxon>
        <taxon>Schizosaccharomycetes</taxon>
        <taxon>Schizosaccharomycetales</taxon>
        <taxon>Schizosaccharomycetaceae</taxon>
        <taxon>Schizosaccharomyces</taxon>
    </lineage>
</organism>
<gene>
    <name evidence="1" type="primary">spb4</name>
    <name type="ORF">SPBC24C6.02</name>
</gene>
<feature type="chain" id="PRO_0000232332" description="ATP-dependent rRNA helicase spb4">
    <location>
        <begin position="1"/>
        <end position="606"/>
    </location>
</feature>
<feature type="domain" description="Helicase ATP-binding" evidence="3">
    <location>
        <begin position="32"/>
        <end position="213"/>
    </location>
</feature>
<feature type="domain" description="Helicase C-terminal" evidence="4">
    <location>
        <begin position="246"/>
        <end position="400"/>
    </location>
</feature>
<feature type="region of interest" description="Disordered" evidence="5">
    <location>
        <begin position="521"/>
        <end position="574"/>
    </location>
</feature>
<feature type="coiled-coil region" evidence="2">
    <location>
        <begin position="521"/>
        <end position="601"/>
    </location>
</feature>
<feature type="short sequence motif" description="Q motif" evidence="6">
    <location>
        <begin position="1"/>
        <end position="29"/>
    </location>
</feature>
<feature type="short sequence motif" description="DEAD box" evidence="6">
    <location>
        <begin position="161"/>
        <end position="164"/>
    </location>
</feature>
<feature type="compositionally biased region" description="Basic residues" evidence="5">
    <location>
        <begin position="529"/>
        <end position="539"/>
    </location>
</feature>
<feature type="binding site" evidence="3">
    <location>
        <begin position="45"/>
        <end position="52"/>
    </location>
    <ligand>
        <name>ATP</name>
        <dbReference type="ChEBI" id="CHEBI:30616"/>
    </ligand>
</feature>
<accession>O74764</accession>
<keyword id="KW-0067">ATP-binding</keyword>
<keyword id="KW-0175">Coiled coil</keyword>
<keyword id="KW-0347">Helicase</keyword>
<keyword id="KW-0378">Hydrolase</keyword>
<keyword id="KW-0547">Nucleotide-binding</keyword>
<keyword id="KW-0539">Nucleus</keyword>
<keyword id="KW-1185">Reference proteome</keyword>
<keyword id="KW-0690">Ribosome biogenesis</keyword>
<keyword id="KW-0694">RNA-binding</keyword>
<keyword id="KW-0698">rRNA processing</keyword>
<proteinExistence type="inferred from homology"/>
<comment type="function">
    <text evidence="1">ATP-binding RNA helicase involved in the biogenesis of 60S ribosomal subunits. Binds 90S pre-ribosomal particles and dissociates from pre-60S ribosomal particles after processing of 27SB pre-rRNA. Required for the normal formation of 18S rRNA through the processing of pre-rRNAs at sites A0, A1 and A2, and the normal formation of 25S and 5.8S rRNAs through the processing of pre-rRNAs at sites C1 and C2.</text>
</comment>
<comment type="catalytic activity">
    <reaction evidence="1">
        <text>ATP + H2O = ADP + phosphate + H(+)</text>
        <dbReference type="Rhea" id="RHEA:13065"/>
        <dbReference type="ChEBI" id="CHEBI:15377"/>
        <dbReference type="ChEBI" id="CHEBI:15378"/>
        <dbReference type="ChEBI" id="CHEBI:30616"/>
        <dbReference type="ChEBI" id="CHEBI:43474"/>
        <dbReference type="ChEBI" id="CHEBI:456216"/>
        <dbReference type="EC" id="3.6.4.13"/>
    </reaction>
</comment>
<comment type="subunit">
    <text evidence="1">Component of pre-60S ribosomal complexes.</text>
</comment>
<comment type="subcellular location">
    <subcellularLocation>
        <location evidence="1">Nucleus</location>
        <location evidence="1">Nucleolus</location>
    </subcellularLocation>
</comment>
<comment type="domain">
    <text>The Q motif is unique to and characteristic of the DEAD box family of RNA helicases and controls ATP binding and hydrolysis.</text>
</comment>
<comment type="similarity">
    <text evidence="6">Belongs to the DEAD box helicase family. DDX55/SPB4 subfamily.</text>
</comment>
<evidence type="ECO:0000250" key="1">
    <source>
        <dbReference type="UniProtKB" id="P25808"/>
    </source>
</evidence>
<evidence type="ECO:0000255" key="2"/>
<evidence type="ECO:0000255" key="3">
    <source>
        <dbReference type="PROSITE-ProRule" id="PRU00541"/>
    </source>
</evidence>
<evidence type="ECO:0000255" key="4">
    <source>
        <dbReference type="PROSITE-ProRule" id="PRU00542"/>
    </source>
</evidence>
<evidence type="ECO:0000256" key="5">
    <source>
        <dbReference type="SAM" id="MobiDB-lite"/>
    </source>
</evidence>
<evidence type="ECO:0000305" key="6"/>
<sequence>MSFQSINIDKWLKNAVAAQGFKKMTPVQANAIPLFLKNKDLVVEAVTGSGKTLAYLLPCFDKVTRRDTDETGLGALIVAPTRELATQIFNVTKELLAYQPDSLDGGKKLVADMYIGGKGTLTNDLASFREKNPSVVIGTPGRLNEMLSHISSKHLEILILDEADTLIDMGFQRTLQSIISQLPKQRRTGLFSATMNDTVSSFLKIAGLRNSVRVSVTVTSKKIDTRTPSSLAIQSLVIPPIYKVQCMIHLLCTIEYEKAIVFFSSCASVEYFNSLFLTYKLPFEIVALHGQQVQSNRSRNFEKFKKSNKKTVLFTTDIASRGLDIPNVDFVLQLDPPLDPKSFSHRCGRAGRAGRAGVAIVLLNDGREEEYEELLRVRKVPITRIDTPIEALDLSRLKVLTHELRKIVSKDRDLYDKGLRAFVSHVRAYTKHHASFIFRIKDLDLGQLATAYALLHLPKMPELKDTEISENIFKKFDIDYATIPYRDQVREQARRRRLEVEKTEPKKLARPAKIKNEAWSKQKEVKEKRNTRREKRKSKKEFLKAQKNEASNNLKQEIVSKAGAQETENDDLIDEESDALSELEEDYRQLKKSKKRKNQASFGFSM</sequence>
<reference key="1">
    <citation type="journal article" date="2002" name="Nature">
        <title>The genome sequence of Schizosaccharomyces pombe.</title>
        <authorList>
            <person name="Wood V."/>
            <person name="Gwilliam R."/>
            <person name="Rajandream M.A."/>
            <person name="Lyne M.H."/>
            <person name="Lyne R."/>
            <person name="Stewart A."/>
            <person name="Sgouros J.G."/>
            <person name="Peat N."/>
            <person name="Hayles J."/>
            <person name="Baker S.G."/>
            <person name="Basham D."/>
            <person name="Bowman S."/>
            <person name="Brooks K."/>
            <person name="Brown D."/>
            <person name="Brown S."/>
            <person name="Chillingworth T."/>
            <person name="Churcher C.M."/>
            <person name="Collins M."/>
            <person name="Connor R."/>
            <person name="Cronin A."/>
            <person name="Davis P."/>
            <person name="Feltwell T."/>
            <person name="Fraser A."/>
            <person name="Gentles S."/>
            <person name="Goble A."/>
            <person name="Hamlin N."/>
            <person name="Harris D.E."/>
            <person name="Hidalgo J."/>
            <person name="Hodgson G."/>
            <person name="Holroyd S."/>
            <person name="Hornsby T."/>
            <person name="Howarth S."/>
            <person name="Huckle E.J."/>
            <person name="Hunt S."/>
            <person name="Jagels K."/>
            <person name="James K.D."/>
            <person name="Jones L."/>
            <person name="Jones M."/>
            <person name="Leather S."/>
            <person name="McDonald S."/>
            <person name="McLean J."/>
            <person name="Mooney P."/>
            <person name="Moule S."/>
            <person name="Mungall K.L."/>
            <person name="Murphy L.D."/>
            <person name="Niblett D."/>
            <person name="Odell C."/>
            <person name="Oliver K."/>
            <person name="O'Neil S."/>
            <person name="Pearson D."/>
            <person name="Quail M.A."/>
            <person name="Rabbinowitsch E."/>
            <person name="Rutherford K.M."/>
            <person name="Rutter S."/>
            <person name="Saunders D."/>
            <person name="Seeger K."/>
            <person name="Sharp S."/>
            <person name="Skelton J."/>
            <person name="Simmonds M.N."/>
            <person name="Squares R."/>
            <person name="Squares S."/>
            <person name="Stevens K."/>
            <person name="Taylor K."/>
            <person name="Taylor R.G."/>
            <person name="Tivey A."/>
            <person name="Walsh S.V."/>
            <person name="Warren T."/>
            <person name="Whitehead S."/>
            <person name="Woodward J.R."/>
            <person name="Volckaert G."/>
            <person name="Aert R."/>
            <person name="Robben J."/>
            <person name="Grymonprez B."/>
            <person name="Weltjens I."/>
            <person name="Vanstreels E."/>
            <person name="Rieger M."/>
            <person name="Schaefer M."/>
            <person name="Mueller-Auer S."/>
            <person name="Gabel C."/>
            <person name="Fuchs M."/>
            <person name="Duesterhoeft A."/>
            <person name="Fritzc C."/>
            <person name="Holzer E."/>
            <person name="Moestl D."/>
            <person name="Hilbert H."/>
            <person name="Borzym K."/>
            <person name="Langer I."/>
            <person name="Beck A."/>
            <person name="Lehrach H."/>
            <person name="Reinhardt R."/>
            <person name="Pohl T.M."/>
            <person name="Eger P."/>
            <person name="Zimmermann W."/>
            <person name="Wedler H."/>
            <person name="Wambutt R."/>
            <person name="Purnelle B."/>
            <person name="Goffeau A."/>
            <person name="Cadieu E."/>
            <person name="Dreano S."/>
            <person name="Gloux S."/>
            <person name="Lelaure V."/>
            <person name="Mottier S."/>
            <person name="Galibert F."/>
            <person name="Aves S.J."/>
            <person name="Xiang Z."/>
            <person name="Hunt C."/>
            <person name="Moore K."/>
            <person name="Hurst S.M."/>
            <person name="Lucas M."/>
            <person name="Rochet M."/>
            <person name="Gaillardin C."/>
            <person name="Tallada V.A."/>
            <person name="Garzon A."/>
            <person name="Thode G."/>
            <person name="Daga R.R."/>
            <person name="Cruzado L."/>
            <person name="Jimenez J."/>
            <person name="Sanchez M."/>
            <person name="del Rey F."/>
            <person name="Benito J."/>
            <person name="Dominguez A."/>
            <person name="Revuelta J.L."/>
            <person name="Moreno S."/>
            <person name="Armstrong J."/>
            <person name="Forsburg S.L."/>
            <person name="Cerutti L."/>
            <person name="Lowe T."/>
            <person name="McCombie W.R."/>
            <person name="Paulsen I."/>
            <person name="Potashkin J."/>
            <person name="Shpakovski G.V."/>
            <person name="Ussery D."/>
            <person name="Barrell B.G."/>
            <person name="Nurse P."/>
        </authorList>
    </citation>
    <scope>NUCLEOTIDE SEQUENCE [LARGE SCALE GENOMIC DNA]</scope>
    <source>
        <strain>972 / ATCC 24843</strain>
    </source>
</reference>
<protein>
    <recommendedName>
        <fullName evidence="6">ATP-dependent rRNA helicase spb4</fullName>
        <ecNumber evidence="1">3.6.4.13</ecNumber>
    </recommendedName>
</protein>